<organism>
    <name type="scientific">Mus musculus</name>
    <name type="common">Mouse</name>
    <dbReference type="NCBI Taxonomy" id="10090"/>
    <lineage>
        <taxon>Eukaryota</taxon>
        <taxon>Metazoa</taxon>
        <taxon>Chordata</taxon>
        <taxon>Craniata</taxon>
        <taxon>Vertebrata</taxon>
        <taxon>Euteleostomi</taxon>
        <taxon>Mammalia</taxon>
        <taxon>Eutheria</taxon>
        <taxon>Euarchontoglires</taxon>
        <taxon>Glires</taxon>
        <taxon>Rodentia</taxon>
        <taxon>Myomorpha</taxon>
        <taxon>Muroidea</taxon>
        <taxon>Muridae</taxon>
        <taxon>Murinae</taxon>
        <taxon>Mus</taxon>
        <taxon>Mus</taxon>
    </lineage>
</organism>
<name>GSTM7_MOUSE</name>
<evidence type="ECO:0000250" key="1"/>
<evidence type="ECO:0000250" key="2">
    <source>
        <dbReference type="UniProtKB" id="P08515"/>
    </source>
</evidence>
<evidence type="ECO:0000250" key="3">
    <source>
        <dbReference type="UniProtKB" id="P28161"/>
    </source>
</evidence>
<evidence type="ECO:0000305" key="4"/>
<evidence type="ECO:0007829" key="5">
    <source>
        <dbReference type="PDB" id="2DC5"/>
    </source>
</evidence>
<dbReference type="EC" id="2.5.1.18" evidence="3"/>
<dbReference type="EMBL" id="AK162441">
    <property type="protein sequence ID" value="BAE36919.1"/>
    <property type="molecule type" value="mRNA"/>
</dbReference>
<dbReference type="EMBL" id="AK002213">
    <property type="protein sequence ID" value="BAE43145.1"/>
    <property type="molecule type" value="mRNA"/>
</dbReference>
<dbReference type="EMBL" id="BC051924">
    <property type="protein sequence ID" value="AAH51924.1"/>
    <property type="molecule type" value="mRNA"/>
</dbReference>
<dbReference type="CCDS" id="CCDS38595.1"/>
<dbReference type="RefSeq" id="NP_080948.2">
    <property type="nucleotide sequence ID" value="NM_026672.2"/>
</dbReference>
<dbReference type="PDB" id="2DC5">
    <property type="method" value="X-ray"/>
    <property type="resolution" value="1.60 A"/>
    <property type="chains" value="A/B=1-218"/>
</dbReference>
<dbReference type="PDBsum" id="2DC5"/>
<dbReference type="SMR" id="Q80W21"/>
<dbReference type="BioGRID" id="212800">
    <property type="interactions" value="2"/>
</dbReference>
<dbReference type="FunCoup" id="Q80W21">
    <property type="interactions" value="253"/>
</dbReference>
<dbReference type="IntAct" id="Q80W21">
    <property type="interactions" value="1"/>
</dbReference>
<dbReference type="STRING" id="10090.ENSMUSP00000004137"/>
<dbReference type="GlyGen" id="Q80W21">
    <property type="glycosylation" value="1 site, 1 O-linked glycan (1 site)"/>
</dbReference>
<dbReference type="iPTMnet" id="Q80W21"/>
<dbReference type="PhosphoSitePlus" id="Q80W21"/>
<dbReference type="SwissPalm" id="Q80W21"/>
<dbReference type="jPOST" id="Q80W21"/>
<dbReference type="PaxDb" id="10090-ENSMUSP00000004137"/>
<dbReference type="PeptideAtlas" id="Q80W21"/>
<dbReference type="ProteomicsDB" id="271105"/>
<dbReference type="Antibodypedia" id="20072">
    <property type="antibodies" value="244 antibodies from 31 providers"/>
</dbReference>
<dbReference type="Ensembl" id="ENSMUST00000004137.11">
    <property type="protein sequence ID" value="ENSMUSP00000004137.4"/>
    <property type="gene ID" value="ENSMUSG00000004035.13"/>
</dbReference>
<dbReference type="GeneID" id="68312"/>
<dbReference type="KEGG" id="mmu:68312"/>
<dbReference type="UCSC" id="uc008qxt.1">
    <property type="organism name" value="mouse"/>
</dbReference>
<dbReference type="AGR" id="MGI:1915562"/>
<dbReference type="CTD" id="68312"/>
<dbReference type="MGI" id="MGI:1915562">
    <property type="gene designation" value="Gstm7"/>
</dbReference>
<dbReference type="VEuPathDB" id="HostDB:ENSMUSG00000004035"/>
<dbReference type="eggNOG" id="KOG1695">
    <property type="taxonomic scope" value="Eukaryota"/>
</dbReference>
<dbReference type="GeneTree" id="ENSGT00940000155416"/>
<dbReference type="InParanoid" id="Q80W21"/>
<dbReference type="OMA" id="NEAMDFR"/>
<dbReference type="OrthoDB" id="4951845at2759"/>
<dbReference type="PhylomeDB" id="Q80W21"/>
<dbReference type="TreeFam" id="TF353040"/>
<dbReference type="Reactome" id="R-MMU-156590">
    <property type="pathway name" value="Glutathione conjugation"/>
</dbReference>
<dbReference type="BioGRID-ORCS" id="68312">
    <property type="hits" value="0 hits in 76 CRISPR screens"/>
</dbReference>
<dbReference type="ChiTaRS" id="Gstm7">
    <property type="organism name" value="mouse"/>
</dbReference>
<dbReference type="EvolutionaryTrace" id="Q80W21"/>
<dbReference type="PRO" id="PR:Q80W21"/>
<dbReference type="Proteomes" id="UP000000589">
    <property type="component" value="Chromosome 3"/>
</dbReference>
<dbReference type="RNAct" id="Q80W21">
    <property type="molecule type" value="protein"/>
</dbReference>
<dbReference type="Bgee" id="ENSMUSG00000004035">
    <property type="expression patterns" value="Expressed in efferent duct and 189 other cell types or tissues"/>
</dbReference>
<dbReference type="ExpressionAtlas" id="Q80W21">
    <property type="expression patterns" value="baseline and differential"/>
</dbReference>
<dbReference type="GO" id="GO:0005829">
    <property type="term" value="C:cytosol"/>
    <property type="evidence" value="ECO:0007669"/>
    <property type="project" value="Ensembl"/>
</dbReference>
<dbReference type="GO" id="GO:0016529">
    <property type="term" value="C:sarcoplasmic reticulum"/>
    <property type="evidence" value="ECO:0007669"/>
    <property type="project" value="Ensembl"/>
</dbReference>
<dbReference type="GO" id="GO:0019899">
    <property type="term" value="F:enzyme binding"/>
    <property type="evidence" value="ECO:0007669"/>
    <property type="project" value="Ensembl"/>
</dbReference>
<dbReference type="GO" id="GO:0005504">
    <property type="term" value="F:fatty acid binding"/>
    <property type="evidence" value="ECO:0007669"/>
    <property type="project" value="Ensembl"/>
</dbReference>
<dbReference type="GO" id="GO:0043295">
    <property type="term" value="F:glutathione binding"/>
    <property type="evidence" value="ECO:0007669"/>
    <property type="project" value="Ensembl"/>
</dbReference>
<dbReference type="GO" id="GO:0004602">
    <property type="term" value="F:glutathione peroxidase activity"/>
    <property type="evidence" value="ECO:0007669"/>
    <property type="project" value="Ensembl"/>
</dbReference>
<dbReference type="GO" id="GO:0004364">
    <property type="term" value="F:glutathione transferase activity"/>
    <property type="evidence" value="ECO:0007669"/>
    <property type="project" value="UniProtKB-EC"/>
</dbReference>
<dbReference type="GO" id="GO:0042803">
    <property type="term" value="F:protein homodimerization activity"/>
    <property type="evidence" value="ECO:0007669"/>
    <property type="project" value="Ensembl"/>
</dbReference>
<dbReference type="GO" id="GO:0005102">
    <property type="term" value="F:signaling receptor binding"/>
    <property type="evidence" value="ECO:0007669"/>
    <property type="project" value="Ensembl"/>
</dbReference>
<dbReference type="GO" id="GO:0070458">
    <property type="term" value="P:cellular detoxification of nitrogen compound"/>
    <property type="evidence" value="ECO:0007669"/>
    <property type="project" value="Ensembl"/>
</dbReference>
<dbReference type="GO" id="GO:0071313">
    <property type="term" value="P:cellular response to caffeine"/>
    <property type="evidence" value="ECO:0007669"/>
    <property type="project" value="Ensembl"/>
</dbReference>
<dbReference type="GO" id="GO:0006749">
    <property type="term" value="P:glutathione metabolic process"/>
    <property type="evidence" value="ECO:0007669"/>
    <property type="project" value="Ensembl"/>
</dbReference>
<dbReference type="GO" id="GO:0051122">
    <property type="term" value="P:hepoxilin biosynthetic process"/>
    <property type="evidence" value="ECO:0007669"/>
    <property type="project" value="Ensembl"/>
</dbReference>
<dbReference type="GO" id="GO:0043651">
    <property type="term" value="P:linoleic acid metabolic process"/>
    <property type="evidence" value="ECO:0007669"/>
    <property type="project" value="Ensembl"/>
</dbReference>
<dbReference type="GO" id="GO:0018916">
    <property type="term" value="P:nitrobenzene metabolic process"/>
    <property type="evidence" value="ECO:0007669"/>
    <property type="project" value="Ensembl"/>
</dbReference>
<dbReference type="GO" id="GO:0010881">
    <property type="term" value="P:regulation of cardiac muscle contraction by regulation of the release of sequestered calcium ion"/>
    <property type="evidence" value="ECO:0007669"/>
    <property type="project" value="Ensembl"/>
</dbReference>
<dbReference type="GO" id="GO:0014809">
    <property type="term" value="P:regulation of skeletal muscle contraction by regulation of release of sequestered calcium ion"/>
    <property type="evidence" value="ECO:0007669"/>
    <property type="project" value="Ensembl"/>
</dbReference>
<dbReference type="GO" id="GO:0042178">
    <property type="term" value="P:xenobiotic catabolic process"/>
    <property type="evidence" value="ECO:0007669"/>
    <property type="project" value="Ensembl"/>
</dbReference>
<dbReference type="CDD" id="cd03209">
    <property type="entry name" value="GST_C_Mu"/>
    <property type="match status" value="1"/>
</dbReference>
<dbReference type="CDD" id="cd03075">
    <property type="entry name" value="GST_N_Mu"/>
    <property type="match status" value="1"/>
</dbReference>
<dbReference type="FunFam" id="1.20.1050.10:FF:000083">
    <property type="entry name" value="Glutathione S-transferase Mu 1"/>
    <property type="match status" value="1"/>
</dbReference>
<dbReference type="FunFam" id="3.40.30.10:FF:000603">
    <property type="entry name" value="Glutathione S-transferase Mu 1"/>
    <property type="match status" value="1"/>
</dbReference>
<dbReference type="Gene3D" id="1.20.1050.10">
    <property type="match status" value="1"/>
</dbReference>
<dbReference type="Gene3D" id="3.40.30.10">
    <property type="entry name" value="Glutaredoxin"/>
    <property type="match status" value="1"/>
</dbReference>
<dbReference type="InterPro" id="IPR010987">
    <property type="entry name" value="Glutathione-S-Trfase_C-like"/>
</dbReference>
<dbReference type="InterPro" id="IPR036282">
    <property type="entry name" value="Glutathione-S-Trfase_C_sf"/>
</dbReference>
<dbReference type="InterPro" id="IPR004045">
    <property type="entry name" value="Glutathione_S-Trfase_N"/>
</dbReference>
<dbReference type="InterPro" id="IPR004046">
    <property type="entry name" value="GST_C"/>
</dbReference>
<dbReference type="InterPro" id="IPR003081">
    <property type="entry name" value="GST_mu"/>
</dbReference>
<dbReference type="InterPro" id="IPR050213">
    <property type="entry name" value="GST_superfamily"/>
</dbReference>
<dbReference type="InterPro" id="IPR036249">
    <property type="entry name" value="Thioredoxin-like_sf"/>
</dbReference>
<dbReference type="PANTHER" id="PTHR11571">
    <property type="entry name" value="GLUTATHIONE S-TRANSFERASE"/>
    <property type="match status" value="1"/>
</dbReference>
<dbReference type="PANTHER" id="PTHR11571:SF269">
    <property type="entry name" value="GLUTATHIONE S-TRANSFERASE MU 7"/>
    <property type="match status" value="1"/>
</dbReference>
<dbReference type="Pfam" id="PF00043">
    <property type="entry name" value="GST_C"/>
    <property type="match status" value="1"/>
</dbReference>
<dbReference type="Pfam" id="PF02798">
    <property type="entry name" value="GST_N"/>
    <property type="match status" value="1"/>
</dbReference>
<dbReference type="PRINTS" id="PR01267">
    <property type="entry name" value="GSTRNSFRASEM"/>
</dbReference>
<dbReference type="SFLD" id="SFLDG01205">
    <property type="entry name" value="AMPS.1"/>
    <property type="match status" value="1"/>
</dbReference>
<dbReference type="SFLD" id="SFLDG00363">
    <property type="entry name" value="AMPS_(cytGST):_Alpha-__Mu-__Pi"/>
    <property type="match status" value="1"/>
</dbReference>
<dbReference type="SUPFAM" id="SSF47616">
    <property type="entry name" value="GST C-terminal domain-like"/>
    <property type="match status" value="1"/>
</dbReference>
<dbReference type="SUPFAM" id="SSF52833">
    <property type="entry name" value="Thioredoxin-like"/>
    <property type="match status" value="1"/>
</dbReference>
<dbReference type="PROSITE" id="PS50405">
    <property type="entry name" value="GST_CTER"/>
    <property type="match status" value="1"/>
</dbReference>
<dbReference type="PROSITE" id="PS50404">
    <property type="entry name" value="GST_NTER"/>
    <property type="match status" value="1"/>
</dbReference>
<feature type="chain" id="PRO_0000333228" description="Glutathione S-transferase Mu 7">
    <location>
        <begin position="1"/>
        <end position="218"/>
    </location>
</feature>
<feature type="domain" description="GST N-terminal">
    <location>
        <begin position="1"/>
        <end position="88"/>
    </location>
</feature>
<feature type="domain" description="GST C-terminal">
    <location>
        <begin position="90"/>
        <end position="208"/>
    </location>
</feature>
<feature type="binding site" evidence="2">
    <location>
        <begin position="7"/>
        <end position="8"/>
    </location>
    <ligand>
        <name>glutathione</name>
        <dbReference type="ChEBI" id="CHEBI:57925"/>
    </ligand>
</feature>
<feature type="binding site" evidence="2">
    <location>
        <begin position="46"/>
        <end position="50"/>
    </location>
    <ligand>
        <name>glutathione</name>
        <dbReference type="ChEBI" id="CHEBI:57925"/>
    </ligand>
</feature>
<feature type="binding site" evidence="2">
    <location>
        <begin position="59"/>
        <end position="60"/>
    </location>
    <ligand>
        <name>glutathione</name>
        <dbReference type="ChEBI" id="CHEBI:57925"/>
    </ligand>
</feature>
<feature type="binding site" evidence="2">
    <location>
        <begin position="72"/>
        <end position="73"/>
    </location>
    <ligand>
        <name>glutathione</name>
        <dbReference type="ChEBI" id="CHEBI:57925"/>
    </ligand>
</feature>
<feature type="binding site" evidence="1">
    <location>
        <position position="116"/>
    </location>
    <ligand>
        <name>substrate</name>
    </ligand>
</feature>
<feature type="sequence conflict" description="In Ref. 1; BAE43145." evidence="4" ref="1">
    <original>E</original>
    <variation>V</variation>
    <location>
        <position position="92"/>
    </location>
</feature>
<feature type="sequence conflict" description="In Ref. 1; BAE36919." evidence="4" ref="1">
    <original>K</original>
    <variation>R</variation>
    <location>
        <position position="124"/>
    </location>
</feature>
<feature type="strand" evidence="5">
    <location>
        <begin position="3"/>
        <end position="11"/>
    </location>
</feature>
<feature type="helix" evidence="5">
    <location>
        <begin position="12"/>
        <end position="14"/>
    </location>
</feature>
<feature type="helix" evidence="5">
    <location>
        <begin position="15"/>
        <end position="23"/>
    </location>
</feature>
<feature type="strand" evidence="5">
    <location>
        <begin position="28"/>
        <end position="33"/>
    </location>
</feature>
<feature type="helix" evidence="5">
    <location>
        <begin position="44"/>
        <end position="47"/>
    </location>
</feature>
<feature type="turn" evidence="5">
    <location>
        <begin position="48"/>
        <end position="51"/>
    </location>
</feature>
<feature type="strand" evidence="5">
    <location>
        <begin position="60"/>
        <end position="65"/>
    </location>
</feature>
<feature type="strand" evidence="5">
    <location>
        <begin position="68"/>
        <end position="72"/>
    </location>
</feature>
<feature type="helix" evidence="5">
    <location>
        <begin position="73"/>
        <end position="83"/>
    </location>
</feature>
<feature type="helix" evidence="5">
    <location>
        <begin position="91"/>
        <end position="115"/>
    </location>
</feature>
<feature type="helix" evidence="5">
    <location>
        <begin position="120"/>
        <end position="142"/>
    </location>
</feature>
<feature type="strand" evidence="5">
    <location>
        <begin position="150"/>
        <end position="152"/>
    </location>
</feature>
<feature type="helix" evidence="5">
    <location>
        <begin position="155"/>
        <end position="170"/>
    </location>
</feature>
<feature type="turn" evidence="5">
    <location>
        <begin position="172"/>
        <end position="177"/>
    </location>
</feature>
<feature type="helix" evidence="5">
    <location>
        <begin position="179"/>
        <end position="190"/>
    </location>
</feature>
<feature type="helix" evidence="5">
    <location>
        <begin position="192"/>
        <end position="198"/>
    </location>
</feature>
<feature type="strand" evidence="5">
    <location>
        <begin position="214"/>
        <end position="216"/>
    </location>
</feature>
<keyword id="KW-0002">3D-structure</keyword>
<keyword id="KW-0963">Cytoplasm</keyword>
<keyword id="KW-1185">Reference proteome</keyword>
<keyword id="KW-0808">Transferase</keyword>
<accession>Q80W21</accession>
<accession>Q3TRV7</accession>
<accession>Q3V4E2</accession>
<protein>
    <recommendedName>
        <fullName>Glutathione S-transferase Mu 7</fullName>
        <ecNumber evidence="3">2.5.1.18</ecNumber>
    </recommendedName>
    <alternativeName>
        <fullName>GST class-mu 7</fullName>
        <shortName>GSTM-7</shortName>
    </alternativeName>
</protein>
<comment type="function">
    <text evidence="3">Conjugation of reduced glutathione to a wide number of exogenous and endogenous hydrophobic electrophiles.</text>
</comment>
<comment type="catalytic activity">
    <reaction evidence="3">
        <text>RX + glutathione = an S-substituted glutathione + a halide anion + H(+)</text>
        <dbReference type="Rhea" id="RHEA:16437"/>
        <dbReference type="ChEBI" id="CHEBI:15378"/>
        <dbReference type="ChEBI" id="CHEBI:16042"/>
        <dbReference type="ChEBI" id="CHEBI:17792"/>
        <dbReference type="ChEBI" id="CHEBI:57925"/>
        <dbReference type="ChEBI" id="CHEBI:90779"/>
        <dbReference type="EC" id="2.5.1.18"/>
    </reaction>
</comment>
<comment type="subunit">
    <text evidence="3">Homodimer.</text>
</comment>
<comment type="subcellular location">
    <subcellularLocation>
        <location evidence="3">Cytoplasm</location>
    </subcellularLocation>
</comment>
<comment type="similarity">
    <text evidence="4">Belongs to the GST superfamily. Mu family.</text>
</comment>
<comment type="caution">
    <text evidence="4">Gstm7 is the putative homolog of human GSTM2.</text>
</comment>
<reference key="1">
    <citation type="journal article" date="2005" name="Science">
        <title>The transcriptional landscape of the mammalian genome.</title>
        <authorList>
            <person name="Carninci P."/>
            <person name="Kasukawa T."/>
            <person name="Katayama S."/>
            <person name="Gough J."/>
            <person name="Frith M.C."/>
            <person name="Maeda N."/>
            <person name="Oyama R."/>
            <person name="Ravasi T."/>
            <person name="Lenhard B."/>
            <person name="Wells C."/>
            <person name="Kodzius R."/>
            <person name="Shimokawa K."/>
            <person name="Bajic V.B."/>
            <person name="Brenner S.E."/>
            <person name="Batalov S."/>
            <person name="Forrest A.R."/>
            <person name="Zavolan M."/>
            <person name="Davis M.J."/>
            <person name="Wilming L.G."/>
            <person name="Aidinis V."/>
            <person name="Allen J.E."/>
            <person name="Ambesi-Impiombato A."/>
            <person name="Apweiler R."/>
            <person name="Aturaliya R.N."/>
            <person name="Bailey T.L."/>
            <person name="Bansal M."/>
            <person name="Baxter L."/>
            <person name="Beisel K.W."/>
            <person name="Bersano T."/>
            <person name="Bono H."/>
            <person name="Chalk A.M."/>
            <person name="Chiu K.P."/>
            <person name="Choudhary V."/>
            <person name="Christoffels A."/>
            <person name="Clutterbuck D.R."/>
            <person name="Crowe M.L."/>
            <person name="Dalla E."/>
            <person name="Dalrymple B.P."/>
            <person name="de Bono B."/>
            <person name="Della Gatta G."/>
            <person name="di Bernardo D."/>
            <person name="Down T."/>
            <person name="Engstrom P."/>
            <person name="Fagiolini M."/>
            <person name="Faulkner G."/>
            <person name="Fletcher C.F."/>
            <person name="Fukushima T."/>
            <person name="Furuno M."/>
            <person name="Futaki S."/>
            <person name="Gariboldi M."/>
            <person name="Georgii-Hemming P."/>
            <person name="Gingeras T.R."/>
            <person name="Gojobori T."/>
            <person name="Green R.E."/>
            <person name="Gustincich S."/>
            <person name="Harbers M."/>
            <person name="Hayashi Y."/>
            <person name="Hensch T.K."/>
            <person name="Hirokawa N."/>
            <person name="Hill D."/>
            <person name="Huminiecki L."/>
            <person name="Iacono M."/>
            <person name="Ikeo K."/>
            <person name="Iwama A."/>
            <person name="Ishikawa T."/>
            <person name="Jakt M."/>
            <person name="Kanapin A."/>
            <person name="Katoh M."/>
            <person name="Kawasawa Y."/>
            <person name="Kelso J."/>
            <person name="Kitamura H."/>
            <person name="Kitano H."/>
            <person name="Kollias G."/>
            <person name="Krishnan S.P."/>
            <person name="Kruger A."/>
            <person name="Kummerfeld S.K."/>
            <person name="Kurochkin I.V."/>
            <person name="Lareau L.F."/>
            <person name="Lazarevic D."/>
            <person name="Lipovich L."/>
            <person name="Liu J."/>
            <person name="Liuni S."/>
            <person name="McWilliam S."/>
            <person name="Madan Babu M."/>
            <person name="Madera M."/>
            <person name="Marchionni L."/>
            <person name="Matsuda H."/>
            <person name="Matsuzawa S."/>
            <person name="Miki H."/>
            <person name="Mignone F."/>
            <person name="Miyake S."/>
            <person name="Morris K."/>
            <person name="Mottagui-Tabar S."/>
            <person name="Mulder N."/>
            <person name="Nakano N."/>
            <person name="Nakauchi H."/>
            <person name="Ng P."/>
            <person name="Nilsson R."/>
            <person name="Nishiguchi S."/>
            <person name="Nishikawa S."/>
            <person name="Nori F."/>
            <person name="Ohara O."/>
            <person name="Okazaki Y."/>
            <person name="Orlando V."/>
            <person name="Pang K.C."/>
            <person name="Pavan W.J."/>
            <person name="Pavesi G."/>
            <person name="Pesole G."/>
            <person name="Petrovsky N."/>
            <person name="Piazza S."/>
            <person name="Reed J."/>
            <person name="Reid J.F."/>
            <person name="Ring B.Z."/>
            <person name="Ringwald M."/>
            <person name="Rost B."/>
            <person name="Ruan Y."/>
            <person name="Salzberg S.L."/>
            <person name="Sandelin A."/>
            <person name="Schneider C."/>
            <person name="Schoenbach C."/>
            <person name="Sekiguchi K."/>
            <person name="Semple C.A."/>
            <person name="Seno S."/>
            <person name="Sessa L."/>
            <person name="Sheng Y."/>
            <person name="Shibata Y."/>
            <person name="Shimada H."/>
            <person name="Shimada K."/>
            <person name="Silva D."/>
            <person name="Sinclair B."/>
            <person name="Sperling S."/>
            <person name="Stupka E."/>
            <person name="Sugiura K."/>
            <person name="Sultana R."/>
            <person name="Takenaka Y."/>
            <person name="Taki K."/>
            <person name="Tammoja K."/>
            <person name="Tan S.L."/>
            <person name="Tang S."/>
            <person name="Taylor M.S."/>
            <person name="Tegner J."/>
            <person name="Teichmann S.A."/>
            <person name="Ueda H.R."/>
            <person name="van Nimwegen E."/>
            <person name="Verardo R."/>
            <person name="Wei C.L."/>
            <person name="Yagi K."/>
            <person name="Yamanishi H."/>
            <person name="Zabarovsky E."/>
            <person name="Zhu S."/>
            <person name="Zimmer A."/>
            <person name="Hide W."/>
            <person name="Bult C."/>
            <person name="Grimmond S.M."/>
            <person name="Teasdale R.D."/>
            <person name="Liu E.T."/>
            <person name="Brusic V."/>
            <person name="Quackenbush J."/>
            <person name="Wahlestedt C."/>
            <person name="Mattick J.S."/>
            <person name="Hume D.A."/>
            <person name="Kai C."/>
            <person name="Sasaki D."/>
            <person name="Tomaru Y."/>
            <person name="Fukuda S."/>
            <person name="Kanamori-Katayama M."/>
            <person name="Suzuki M."/>
            <person name="Aoki J."/>
            <person name="Arakawa T."/>
            <person name="Iida J."/>
            <person name="Imamura K."/>
            <person name="Itoh M."/>
            <person name="Kato T."/>
            <person name="Kawaji H."/>
            <person name="Kawagashira N."/>
            <person name="Kawashima T."/>
            <person name="Kojima M."/>
            <person name="Kondo S."/>
            <person name="Konno H."/>
            <person name="Nakano K."/>
            <person name="Ninomiya N."/>
            <person name="Nishio T."/>
            <person name="Okada M."/>
            <person name="Plessy C."/>
            <person name="Shibata K."/>
            <person name="Shiraki T."/>
            <person name="Suzuki S."/>
            <person name="Tagami M."/>
            <person name="Waki K."/>
            <person name="Watahiki A."/>
            <person name="Okamura-Oho Y."/>
            <person name="Suzuki H."/>
            <person name="Kawai J."/>
            <person name="Hayashizaki Y."/>
        </authorList>
    </citation>
    <scope>NUCLEOTIDE SEQUENCE [LARGE SCALE MRNA]</scope>
    <source>
        <strain>C57BL/6J</strain>
        <tissue>Embryo</tissue>
        <tissue>Kidney</tissue>
    </source>
</reference>
<reference key="2">
    <citation type="journal article" date="2004" name="Genome Res.">
        <title>The status, quality, and expansion of the NIH full-length cDNA project: the Mammalian Gene Collection (MGC).</title>
        <authorList>
            <consortium name="The MGC Project Team"/>
        </authorList>
    </citation>
    <scope>NUCLEOTIDE SEQUENCE [LARGE SCALE MRNA]</scope>
    <source>
        <strain>C57BL/6J</strain>
        <tissue>Brain</tissue>
    </source>
</reference>
<reference key="3">
    <citation type="journal article" date="2010" name="Cell">
        <title>A tissue-specific atlas of mouse protein phosphorylation and expression.</title>
        <authorList>
            <person name="Huttlin E.L."/>
            <person name="Jedrychowski M.P."/>
            <person name="Elias J.E."/>
            <person name="Goswami T."/>
            <person name="Rad R."/>
            <person name="Beausoleil S.A."/>
            <person name="Villen J."/>
            <person name="Haas W."/>
            <person name="Sowa M.E."/>
            <person name="Gygi S.P."/>
        </authorList>
    </citation>
    <scope>IDENTIFICATION BY MASS SPECTROMETRY [LARGE SCALE ANALYSIS]</scope>
    <source>
        <tissue>Brain</tissue>
        <tissue>Heart</tissue>
        <tissue>Kidney</tissue>
        <tissue>Liver</tissue>
        <tissue>Lung</tissue>
        <tissue>Pancreas</tissue>
        <tissue>Testis</tissue>
    </source>
</reference>
<reference key="4">
    <citation type="submission" date="2006-06" db="PDB data bank">
        <title>Crystal structure of mouse glutathione S-transferase, mu7 (gstm7) at 1.6 A resolution.</title>
        <authorList>
            <consortium name="RIKEN structural genomics initiative (RSGI)"/>
        </authorList>
    </citation>
    <scope>X-RAY CRYSTALLOGRAPHY (1.6 ANGSTROMS)</scope>
</reference>
<sequence>MPMTLGYWDIRGLAHAIRLFLEYTDSSYEEKRYTMGDAPDYDQSQWLNEKFKLGLDFPNLPYLIDGSHKITQSNAILRYLGRKHNLCGETEEERIRVDILENQLMDNRMVLARLCYNADFEKLKPGYLEQLPGMMRLYSEFLGKRPWFAGDKITFVDFIAYDVLERNQVFEAKCLDAFPNLKDFIARFEGLKKISDYMKTSRFLPRPMFTKMATWGSN</sequence>
<proteinExistence type="evidence at protein level"/>
<gene>
    <name type="primary">Gstm7</name>
</gene>